<accession>P67989</accession>
<accession>P40250</accession>
<comment type="function">
    <text evidence="2 4">Its primary physiological function is unclear. Has cytoprotective activity against internal or environmental stresses. May play a role in neuronal development and synaptic plasticity. May be required for neuronal myelin sheath maintenance. May play a role in iron uptake and iron homeostasis. Soluble oligomers are toxic to cultured neuroblastoma cells and induce apoptosis (in vitro). Association with GPC1 (via its heparan sulfate chains) targets PRNP to lipid rafts. Also provides Cu(2+) or Zn(2+) for the ascorbate-mediated GPC1 deaminase degradation of its heparan sulfate side chains (By similarity).</text>
</comment>
<comment type="subunit">
    <text evidence="2 4">Monomer and homodimer. Has a tendency to aggregate into amyloid fibrils containing a cross-beta spine, formed by a steric zipper of superposed beta-strands. Soluble oligomers may represent an intermediate stage on the path to fibril formation. Copper binding may promote oligomerization. Interacts with GRB2, APP, ERI3/PRNPIP and SYN1. Mislocalized cytosolically exposed PrP interacts with MGRN1; this interaction alters MGRN1 subcellular location and causes lysosomal enlargement. Interacts with KIAA1191.</text>
</comment>
<comment type="subcellular location">
    <subcellularLocation>
        <location evidence="2">Cell membrane</location>
        <topology evidence="2">Lipid-anchor</topology>
        <topology evidence="2">GPI-anchor</topology>
    </subcellularLocation>
    <subcellularLocation>
        <location evidence="4">Golgi apparatus</location>
    </subcellularLocation>
    <text evidence="2">Targeted to lipid rafts via association with the heparan sulfate chains of GPC1. Colocates, in the presence of Cu(2+), to vesicles in para- and perinuclear regions, where both proteins undergo internalization. Heparin displaces PRNP from lipid rafts and promotes endocytosis.</text>
</comment>
<comment type="domain">
    <text evidence="2">The normal, monomeric form has a mainly alpha-helical structure. The disease-associated, protease-resistant form forms amyloid fibrils containing a cross-beta spine, formed by a steric zipper of superposed beta-strands. Disease mutations may favor intermolecular contacts via short beta strands, and may thereby trigger oligomerization.</text>
</comment>
<comment type="domain">
    <text evidence="2">Contains an N-terminal region composed of octamer repeats. At low copper concentrations, the sidechains of His residues from three or four repeats contribute to the binding of a single copper ion. Alternatively, a copper ion can be bound by interaction with the sidechain and backbone amide nitrogen of a single His residue. The observed copper binding stoichiometry suggests that two repeat regions cooperate to stabilize the binding of a single copper ion. At higher copper concentrations, each octamer can bind one copper ion by interactions with the His sidechain and Gly backbone atoms. A mixture of binding types may occur, especially in the case of octamer repeat expansion. Copper binding may stabilize the conformation of this region and may promote oligomerization.</text>
</comment>
<comment type="disease">
    <text evidence="7">PrP is found in high quantity in the brain of humans and animals infected with the degenerative neurological diseases kuru, Creutzfeldt-Jakob disease (CJD), Gerstmann-Straussler syndrome (GSS), scrapie, bovine spongiform encephalopathy (BSE), transmissible mink encephalopathy (TME), etc.</text>
</comment>
<comment type="similarity">
    <text evidence="7">Belongs to the prion family.</text>
</comment>
<reference key="1">
    <citation type="journal article" date="1995" name="J. Mol. Biol.">
        <title>Prion protein gene variation among primates.</title>
        <authorList>
            <person name="Schaetzl H.M."/>
            <person name="Da Costa M."/>
            <person name="Taylor L."/>
            <person name="Cohen F.E."/>
            <person name="Prusiner S.B."/>
        </authorList>
    </citation>
    <scope>NUCLEOTIDE SEQUENCE [GENOMIC DNA]</scope>
</reference>
<reference key="2">
    <citation type="journal article" date="1997" name="J. Mol. Biol.">
        <authorList>
            <person name="Schaetzl H.M."/>
            <person name="Da Costa M."/>
            <person name="Taylor L."/>
            <person name="Cohen F.E."/>
            <person name="Prusiner S.B."/>
        </authorList>
    </citation>
    <scope>ERRATUM OF PUBMED:7837269</scope>
</reference>
<proteinExistence type="inferred from homology"/>
<sequence length="245" mass="26885">MANLGCWMLVVFVATWSDLGLCKKRPKPGGWNTGGSRYPGQGSPGGNRYPPQGGGGWGQPHGGGWGQPHGGGWGQPHGGGWGQGGGTHNQWHKPSKPKTSMKHMAGAAAAGAVVGGLGGYMLGSAMSRPLIHFGNDYEDRYYRENMYRYPNQVYYRPVDQYSNQNNFVHDCVNITIKQHTVTTTTKGENFTETDVKMMERVVEQMCITQYEKESQAYYQRGSSMVLFSSPPVILLISFLIFLIVG</sequence>
<protein>
    <recommendedName>
        <fullName>Major prion protein</fullName>
        <shortName>PrP</shortName>
    </recommendedName>
    <alternativeName>
        <fullName>PrP27-30</fullName>
    </alternativeName>
    <alternativeName>
        <fullName>PrP33-35C</fullName>
    </alternativeName>
    <cdAntigenName>CD230</cdAntigenName>
</protein>
<evidence type="ECO:0000250" key="1"/>
<evidence type="ECO:0000250" key="2">
    <source>
        <dbReference type="UniProtKB" id="P04156"/>
    </source>
</evidence>
<evidence type="ECO:0000250" key="3">
    <source>
        <dbReference type="UniProtKB" id="P04273"/>
    </source>
</evidence>
<evidence type="ECO:0000250" key="4">
    <source>
        <dbReference type="UniProtKB" id="P04925"/>
    </source>
</evidence>
<evidence type="ECO:0000255" key="5"/>
<evidence type="ECO:0000256" key="6">
    <source>
        <dbReference type="SAM" id="MobiDB-lite"/>
    </source>
</evidence>
<evidence type="ECO:0000305" key="7"/>
<gene>
    <name type="primary">PRNP</name>
    <name type="synonym">PRP</name>
</gene>
<keyword id="KW-0034">Amyloid</keyword>
<keyword id="KW-1003">Cell membrane</keyword>
<keyword id="KW-0186">Copper</keyword>
<keyword id="KW-1015">Disulfide bond</keyword>
<keyword id="KW-0325">Glycoprotein</keyword>
<keyword id="KW-0333">Golgi apparatus</keyword>
<keyword id="KW-0336">GPI-anchor</keyword>
<keyword id="KW-0449">Lipoprotein</keyword>
<keyword id="KW-0472">Membrane</keyword>
<keyword id="KW-0479">Metal-binding</keyword>
<keyword id="KW-0640">Prion</keyword>
<keyword id="KW-0677">Repeat</keyword>
<keyword id="KW-0732">Signal</keyword>
<keyword id="KW-0862">Zinc</keyword>
<name>PRIO_CERDI</name>
<dbReference type="EMBL" id="U08292">
    <property type="protein sequence ID" value="AAC50081.1"/>
    <property type="molecule type" value="Genomic_DNA"/>
</dbReference>
<dbReference type="PIR" id="S71045">
    <property type="entry name" value="S71045"/>
</dbReference>
<dbReference type="SMR" id="P67989"/>
<dbReference type="GlyCosmos" id="P67989">
    <property type="glycosylation" value="2 sites, No reported glycans"/>
</dbReference>
<dbReference type="GO" id="GO:0005794">
    <property type="term" value="C:Golgi apparatus"/>
    <property type="evidence" value="ECO:0007669"/>
    <property type="project" value="UniProtKB-SubCell"/>
</dbReference>
<dbReference type="GO" id="GO:0005886">
    <property type="term" value="C:plasma membrane"/>
    <property type="evidence" value="ECO:0007669"/>
    <property type="project" value="UniProtKB-SubCell"/>
</dbReference>
<dbReference type="GO" id="GO:0098552">
    <property type="term" value="C:side of membrane"/>
    <property type="evidence" value="ECO:0007669"/>
    <property type="project" value="UniProtKB-KW"/>
</dbReference>
<dbReference type="GO" id="GO:0005507">
    <property type="term" value="F:copper ion binding"/>
    <property type="evidence" value="ECO:0000250"/>
    <property type="project" value="UniProtKB"/>
</dbReference>
<dbReference type="GO" id="GO:0051260">
    <property type="term" value="P:protein homooligomerization"/>
    <property type="evidence" value="ECO:0007669"/>
    <property type="project" value="InterPro"/>
</dbReference>
<dbReference type="FunFam" id="1.10.790.10:FF:000001">
    <property type="entry name" value="Major prion protein"/>
    <property type="match status" value="1"/>
</dbReference>
<dbReference type="Gene3D" id="1.10.790.10">
    <property type="entry name" value="Prion/Doppel protein, beta-ribbon domain"/>
    <property type="match status" value="1"/>
</dbReference>
<dbReference type="InterPro" id="IPR000817">
    <property type="entry name" value="Prion"/>
</dbReference>
<dbReference type="InterPro" id="IPR036924">
    <property type="entry name" value="Prion/Doppel_b-ribbon_dom_sf"/>
</dbReference>
<dbReference type="InterPro" id="IPR022416">
    <property type="entry name" value="Prion/Doppel_prot_b-ribbon_dom"/>
</dbReference>
<dbReference type="InterPro" id="IPR020949">
    <property type="entry name" value="Prion_copper_b_octapeptide"/>
</dbReference>
<dbReference type="InterPro" id="IPR025860">
    <property type="entry name" value="Prion_N"/>
</dbReference>
<dbReference type="PANTHER" id="PTHR15506">
    <property type="entry name" value="DOPPEL PRION"/>
    <property type="match status" value="1"/>
</dbReference>
<dbReference type="PANTHER" id="PTHR15506:SF2">
    <property type="entry name" value="MAJOR PRION PROTEIN"/>
    <property type="match status" value="1"/>
</dbReference>
<dbReference type="Pfam" id="PF00377">
    <property type="entry name" value="Prion"/>
    <property type="match status" value="1"/>
</dbReference>
<dbReference type="Pfam" id="PF11587">
    <property type="entry name" value="Prion_bPrPp"/>
    <property type="match status" value="1"/>
</dbReference>
<dbReference type="Pfam" id="PF03991">
    <property type="entry name" value="Prion_octapep"/>
    <property type="match status" value="1"/>
</dbReference>
<dbReference type="PRINTS" id="PR00341">
    <property type="entry name" value="PRION"/>
</dbReference>
<dbReference type="SMART" id="SM00157">
    <property type="entry name" value="PRP"/>
    <property type="match status" value="1"/>
</dbReference>
<dbReference type="SUPFAM" id="SSF54098">
    <property type="entry name" value="Prion-like"/>
    <property type="match status" value="1"/>
</dbReference>
<dbReference type="PROSITE" id="PS00291">
    <property type="entry name" value="PRION_1"/>
    <property type="match status" value="1"/>
</dbReference>
<dbReference type="PROSITE" id="PS00706">
    <property type="entry name" value="PRION_2"/>
    <property type="match status" value="1"/>
</dbReference>
<feature type="signal peptide" evidence="1">
    <location>
        <begin position="1"/>
        <end position="22"/>
    </location>
</feature>
<feature type="chain" id="PRO_0000025651" description="Major prion protein">
    <location>
        <begin position="23"/>
        <end position="222"/>
    </location>
</feature>
<feature type="propeptide" id="PRO_0000025652" description="Removed in mature form" evidence="1">
    <location>
        <begin position="223"/>
        <end position="245"/>
    </location>
</feature>
<feature type="repeat" description="1">
    <location>
        <begin position="51"/>
        <end position="59"/>
    </location>
</feature>
<feature type="repeat" description="2">
    <location>
        <begin position="60"/>
        <end position="67"/>
    </location>
</feature>
<feature type="repeat" description="3">
    <location>
        <begin position="68"/>
        <end position="75"/>
    </location>
</feature>
<feature type="repeat" description="4">
    <location>
        <begin position="76"/>
        <end position="83"/>
    </location>
</feature>
<feature type="region of interest" description="Interaction with GRB2, ERI3 and SYN1" evidence="4">
    <location>
        <begin position="23"/>
        <end position="222"/>
    </location>
</feature>
<feature type="region of interest" description="Disordered" evidence="6">
    <location>
        <begin position="25"/>
        <end position="102"/>
    </location>
</feature>
<feature type="region of interest" description="4 X 8 AA tandem repeats of P-H-G-G-G-W-G-Q">
    <location>
        <begin position="51"/>
        <end position="83"/>
    </location>
</feature>
<feature type="compositionally biased region" description="Gly residues" evidence="6">
    <location>
        <begin position="52"/>
        <end position="87"/>
    </location>
</feature>
<feature type="compositionally biased region" description="Basic residues" evidence="6">
    <location>
        <begin position="90"/>
        <end position="101"/>
    </location>
</feature>
<feature type="binding site" evidence="2">
    <location>
        <position position="54"/>
    </location>
    <ligand>
        <name>Cu(2+)</name>
        <dbReference type="ChEBI" id="CHEBI:29036"/>
        <label>1</label>
    </ligand>
</feature>
<feature type="binding site" evidence="2">
    <location>
        <position position="55"/>
    </location>
    <ligand>
        <name>Cu(2+)</name>
        <dbReference type="ChEBI" id="CHEBI:29036"/>
        <label>1</label>
    </ligand>
</feature>
<feature type="binding site" evidence="2">
    <location>
        <position position="61"/>
    </location>
    <ligand>
        <name>Cu(2+)</name>
        <dbReference type="ChEBI" id="CHEBI:29036"/>
        <label>2</label>
    </ligand>
</feature>
<feature type="binding site" evidence="2">
    <location>
        <position position="62"/>
    </location>
    <ligand>
        <name>Cu(2+)</name>
        <dbReference type="ChEBI" id="CHEBI:29036"/>
        <label>2</label>
    </ligand>
</feature>
<feature type="binding site" evidence="2">
    <location>
        <position position="63"/>
    </location>
    <ligand>
        <name>Cu(2+)</name>
        <dbReference type="ChEBI" id="CHEBI:29036"/>
        <label>2</label>
    </ligand>
</feature>
<feature type="binding site" evidence="2">
    <location>
        <position position="69"/>
    </location>
    <ligand>
        <name>Cu(2+)</name>
        <dbReference type="ChEBI" id="CHEBI:29036"/>
        <label>3</label>
    </ligand>
</feature>
<feature type="binding site" evidence="2">
    <location>
        <position position="70"/>
    </location>
    <ligand>
        <name>Cu(2+)</name>
        <dbReference type="ChEBI" id="CHEBI:29036"/>
        <label>3</label>
    </ligand>
</feature>
<feature type="binding site" evidence="2">
    <location>
        <position position="71"/>
    </location>
    <ligand>
        <name>Cu(2+)</name>
        <dbReference type="ChEBI" id="CHEBI:29036"/>
        <label>3</label>
    </ligand>
</feature>
<feature type="binding site" evidence="2">
    <location>
        <position position="77"/>
    </location>
    <ligand>
        <name>Cu(2+)</name>
        <dbReference type="ChEBI" id="CHEBI:29036"/>
        <label>4</label>
    </ligand>
</feature>
<feature type="binding site" evidence="2">
    <location>
        <position position="78"/>
    </location>
    <ligand>
        <name>Cu(2+)</name>
        <dbReference type="ChEBI" id="CHEBI:29036"/>
        <label>4</label>
    </ligand>
</feature>
<feature type="binding site" evidence="2">
    <location>
        <position position="79"/>
    </location>
    <ligand>
        <name>Cu(2+)</name>
        <dbReference type="ChEBI" id="CHEBI:29036"/>
        <label>4</label>
    </ligand>
</feature>
<feature type="lipid moiety-binding region" description="GPI-anchor amidated serine" evidence="3">
    <location>
        <position position="222"/>
    </location>
</feature>
<feature type="glycosylation site" description="N-linked (GlcNAc...) asparagine" evidence="5">
    <location>
        <position position="173"/>
    </location>
</feature>
<feature type="glycosylation site" description="N-linked (GlcNAc...) asparagine" evidence="5">
    <location>
        <position position="189"/>
    </location>
</feature>
<feature type="disulfide bond" evidence="3">
    <location>
        <begin position="171"/>
        <end position="206"/>
    </location>
</feature>
<organism>
    <name type="scientific">Cercopithecus diana</name>
    <name type="common">Diana monkey</name>
    <dbReference type="NCBI Taxonomy" id="36224"/>
    <lineage>
        <taxon>Eukaryota</taxon>
        <taxon>Metazoa</taxon>
        <taxon>Chordata</taxon>
        <taxon>Craniata</taxon>
        <taxon>Vertebrata</taxon>
        <taxon>Euteleostomi</taxon>
        <taxon>Mammalia</taxon>
        <taxon>Eutheria</taxon>
        <taxon>Euarchontoglires</taxon>
        <taxon>Primates</taxon>
        <taxon>Haplorrhini</taxon>
        <taxon>Catarrhini</taxon>
        <taxon>Cercopithecidae</taxon>
        <taxon>Cercopithecinae</taxon>
        <taxon>Cercopithecus</taxon>
    </lineage>
</organism>